<feature type="chain" id="PRO_1000091044" description="Aspartate--tRNA ligase">
    <location>
        <begin position="1"/>
        <end position="590"/>
    </location>
</feature>
<feature type="region of interest" description="Aspartate" evidence="1">
    <location>
        <begin position="195"/>
        <end position="198"/>
    </location>
</feature>
<feature type="binding site" evidence="1">
    <location>
        <position position="171"/>
    </location>
    <ligand>
        <name>L-aspartate</name>
        <dbReference type="ChEBI" id="CHEBI:29991"/>
    </ligand>
</feature>
<feature type="binding site" evidence="1">
    <location>
        <begin position="217"/>
        <end position="219"/>
    </location>
    <ligand>
        <name>ATP</name>
        <dbReference type="ChEBI" id="CHEBI:30616"/>
    </ligand>
</feature>
<feature type="binding site" evidence="1">
    <location>
        <position position="217"/>
    </location>
    <ligand>
        <name>L-aspartate</name>
        <dbReference type="ChEBI" id="CHEBI:29991"/>
    </ligand>
</feature>
<feature type="binding site" evidence="1">
    <location>
        <position position="226"/>
    </location>
    <ligand>
        <name>ATP</name>
        <dbReference type="ChEBI" id="CHEBI:30616"/>
    </ligand>
</feature>
<feature type="binding site" evidence="1">
    <location>
        <position position="448"/>
    </location>
    <ligand>
        <name>L-aspartate</name>
        <dbReference type="ChEBI" id="CHEBI:29991"/>
    </ligand>
</feature>
<feature type="binding site" evidence="1">
    <location>
        <position position="482"/>
    </location>
    <ligand>
        <name>ATP</name>
        <dbReference type="ChEBI" id="CHEBI:30616"/>
    </ligand>
</feature>
<feature type="binding site" evidence="1">
    <location>
        <position position="489"/>
    </location>
    <ligand>
        <name>L-aspartate</name>
        <dbReference type="ChEBI" id="CHEBI:29991"/>
    </ligand>
</feature>
<feature type="binding site" evidence="1">
    <location>
        <begin position="534"/>
        <end position="537"/>
    </location>
    <ligand>
        <name>ATP</name>
        <dbReference type="ChEBI" id="CHEBI:30616"/>
    </ligand>
</feature>
<gene>
    <name evidence="1" type="primary">aspS</name>
    <name type="ordered locus">SbBS512_E1106</name>
</gene>
<protein>
    <recommendedName>
        <fullName evidence="1">Aspartate--tRNA ligase</fullName>
        <ecNumber evidence="1">6.1.1.12</ecNumber>
    </recommendedName>
    <alternativeName>
        <fullName evidence="1">Aspartyl-tRNA synthetase</fullName>
        <shortName evidence="1">AspRS</shortName>
    </alternativeName>
</protein>
<evidence type="ECO:0000255" key="1">
    <source>
        <dbReference type="HAMAP-Rule" id="MF_00044"/>
    </source>
</evidence>
<name>SYD_SHIB3</name>
<proteinExistence type="inferred from homology"/>
<keyword id="KW-0030">Aminoacyl-tRNA synthetase</keyword>
<keyword id="KW-0067">ATP-binding</keyword>
<keyword id="KW-0963">Cytoplasm</keyword>
<keyword id="KW-0436">Ligase</keyword>
<keyword id="KW-0547">Nucleotide-binding</keyword>
<keyword id="KW-0648">Protein biosynthesis</keyword>
<keyword id="KW-1185">Reference proteome</keyword>
<reference key="1">
    <citation type="submission" date="2008-05" db="EMBL/GenBank/DDBJ databases">
        <title>Complete sequence of Shigella boydii serotype 18 strain BS512.</title>
        <authorList>
            <person name="Rasko D.A."/>
            <person name="Rosovitz M."/>
            <person name="Maurelli A.T."/>
            <person name="Myers G."/>
            <person name="Seshadri R."/>
            <person name="Cer R."/>
            <person name="Jiang L."/>
            <person name="Ravel J."/>
            <person name="Sebastian Y."/>
        </authorList>
    </citation>
    <scope>NUCLEOTIDE SEQUENCE [LARGE SCALE GENOMIC DNA]</scope>
    <source>
        <strain>CDC 3083-94 / BS512</strain>
    </source>
</reference>
<dbReference type="EC" id="6.1.1.12" evidence="1"/>
<dbReference type="EMBL" id="CP001063">
    <property type="protein sequence ID" value="ACD09356.1"/>
    <property type="molecule type" value="Genomic_DNA"/>
</dbReference>
<dbReference type="RefSeq" id="WP_001258662.1">
    <property type="nucleotide sequence ID" value="NC_010658.1"/>
</dbReference>
<dbReference type="SMR" id="B2TXL2"/>
<dbReference type="STRING" id="344609.SbBS512_E1106"/>
<dbReference type="GeneID" id="75202728"/>
<dbReference type="KEGG" id="sbc:SbBS512_E1106"/>
<dbReference type="HOGENOM" id="CLU_014330_3_2_6"/>
<dbReference type="Proteomes" id="UP000001030">
    <property type="component" value="Chromosome"/>
</dbReference>
<dbReference type="GO" id="GO:0005737">
    <property type="term" value="C:cytoplasm"/>
    <property type="evidence" value="ECO:0007669"/>
    <property type="project" value="UniProtKB-SubCell"/>
</dbReference>
<dbReference type="GO" id="GO:0004815">
    <property type="term" value="F:aspartate-tRNA ligase activity"/>
    <property type="evidence" value="ECO:0007669"/>
    <property type="project" value="UniProtKB-UniRule"/>
</dbReference>
<dbReference type="GO" id="GO:0005524">
    <property type="term" value="F:ATP binding"/>
    <property type="evidence" value="ECO:0007669"/>
    <property type="project" value="UniProtKB-UniRule"/>
</dbReference>
<dbReference type="GO" id="GO:0003676">
    <property type="term" value="F:nucleic acid binding"/>
    <property type="evidence" value="ECO:0007669"/>
    <property type="project" value="InterPro"/>
</dbReference>
<dbReference type="GO" id="GO:0006422">
    <property type="term" value="P:aspartyl-tRNA aminoacylation"/>
    <property type="evidence" value="ECO:0007669"/>
    <property type="project" value="UniProtKB-UniRule"/>
</dbReference>
<dbReference type="CDD" id="cd00777">
    <property type="entry name" value="AspRS_core"/>
    <property type="match status" value="1"/>
</dbReference>
<dbReference type="CDD" id="cd04317">
    <property type="entry name" value="EcAspRS_like_N"/>
    <property type="match status" value="1"/>
</dbReference>
<dbReference type="FunFam" id="2.40.50.140:FF:000080">
    <property type="entry name" value="Aspartate--tRNA ligase"/>
    <property type="match status" value="1"/>
</dbReference>
<dbReference type="FunFam" id="3.30.1360.30:FF:000001">
    <property type="entry name" value="Aspartate--tRNA ligase"/>
    <property type="match status" value="1"/>
</dbReference>
<dbReference type="Gene3D" id="3.30.930.10">
    <property type="entry name" value="Bira Bifunctional Protein, Domain 2"/>
    <property type="match status" value="1"/>
</dbReference>
<dbReference type="Gene3D" id="3.30.1360.30">
    <property type="entry name" value="GAD-like domain"/>
    <property type="match status" value="1"/>
</dbReference>
<dbReference type="Gene3D" id="2.40.50.140">
    <property type="entry name" value="Nucleic acid-binding proteins"/>
    <property type="match status" value="1"/>
</dbReference>
<dbReference type="HAMAP" id="MF_00044">
    <property type="entry name" value="Asp_tRNA_synth_type1"/>
    <property type="match status" value="1"/>
</dbReference>
<dbReference type="InterPro" id="IPR004364">
    <property type="entry name" value="Aa-tRNA-synt_II"/>
</dbReference>
<dbReference type="InterPro" id="IPR006195">
    <property type="entry name" value="aa-tRNA-synth_II"/>
</dbReference>
<dbReference type="InterPro" id="IPR045864">
    <property type="entry name" value="aa-tRNA-synth_II/BPL/LPL"/>
</dbReference>
<dbReference type="InterPro" id="IPR004524">
    <property type="entry name" value="Asp-tRNA-ligase_1"/>
</dbReference>
<dbReference type="InterPro" id="IPR047089">
    <property type="entry name" value="Asp-tRNA-ligase_1_N"/>
</dbReference>
<dbReference type="InterPro" id="IPR002312">
    <property type="entry name" value="Asp/Asn-tRNA-synth_IIb"/>
</dbReference>
<dbReference type="InterPro" id="IPR047090">
    <property type="entry name" value="AspRS_core"/>
</dbReference>
<dbReference type="InterPro" id="IPR004115">
    <property type="entry name" value="GAD-like_sf"/>
</dbReference>
<dbReference type="InterPro" id="IPR029351">
    <property type="entry name" value="GAD_dom"/>
</dbReference>
<dbReference type="InterPro" id="IPR012340">
    <property type="entry name" value="NA-bd_OB-fold"/>
</dbReference>
<dbReference type="InterPro" id="IPR004365">
    <property type="entry name" value="NA-bd_OB_tRNA"/>
</dbReference>
<dbReference type="NCBIfam" id="TIGR00459">
    <property type="entry name" value="aspS_bact"/>
    <property type="match status" value="1"/>
</dbReference>
<dbReference type="NCBIfam" id="NF001750">
    <property type="entry name" value="PRK00476.1"/>
    <property type="match status" value="1"/>
</dbReference>
<dbReference type="PANTHER" id="PTHR22594:SF5">
    <property type="entry name" value="ASPARTATE--TRNA LIGASE, MITOCHONDRIAL"/>
    <property type="match status" value="1"/>
</dbReference>
<dbReference type="PANTHER" id="PTHR22594">
    <property type="entry name" value="ASPARTYL/LYSYL-TRNA SYNTHETASE"/>
    <property type="match status" value="1"/>
</dbReference>
<dbReference type="Pfam" id="PF02938">
    <property type="entry name" value="GAD"/>
    <property type="match status" value="1"/>
</dbReference>
<dbReference type="Pfam" id="PF00152">
    <property type="entry name" value="tRNA-synt_2"/>
    <property type="match status" value="1"/>
</dbReference>
<dbReference type="Pfam" id="PF01336">
    <property type="entry name" value="tRNA_anti-codon"/>
    <property type="match status" value="1"/>
</dbReference>
<dbReference type="PRINTS" id="PR01042">
    <property type="entry name" value="TRNASYNTHASP"/>
</dbReference>
<dbReference type="SUPFAM" id="SSF55681">
    <property type="entry name" value="Class II aaRS and biotin synthetases"/>
    <property type="match status" value="1"/>
</dbReference>
<dbReference type="SUPFAM" id="SSF55261">
    <property type="entry name" value="GAD domain-like"/>
    <property type="match status" value="1"/>
</dbReference>
<dbReference type="SUPFAM" id="SSF50249">
    <property type="entry name" value="Nucleic acid-binding proteins"/>
    <property type="match status" value="1"/>
</dbReference>
<dbReference type="PROSITE" id="PS50862">
    <property type="entry name" value="AA_TRNA_LIGASE_II"/>
    <property type="match status" value="1"/>
</dbReference>
<accession>B2TXL2</accession>
<comment type="function">
    <text evidence="1">Catalyzes the attachment of L-aspartate to tRNA(Asp) in a two-step reaction: L-aspartate is first activated by ATP to form Asp-AMP and then transferred to the acceptor end of tRNA(Asp).</text>
</comment>
<comment type="catalytic activity">
    <reaction evidence="1">
        <text>tRNA(Asp) + L-aspartate + ATP = L-aspartyl-tRNA(Asp) + AMP + diphosphate</text>
        <dbReference type="Rhea" id="RHEA:19649"/>
        <dbReference type="Rhea" id="RHEA-COMP:9660"/>
        <dbReference type="Rhea" id="RHEA-COMP:9678"/>
        <dbReference type="ChEBI" id="CHEBI:29991"/>
        <dbReference type="ChEBI" id="CHEBI:30616"/>
        <dbReference type="ChEBI" id="CHEBI:33019"/>
        <dbReference type="ChEBI" id="CHEBI:78442"/>
        <dbReference type="ChEBI" id="CHEBI:78516"/>
        <dbReference type="ChEBI" id="CHEBI:456215"/>
        <dbReference type="EC" id="6.1.1.12"/>
    </reaction>
</comment>
<comment type="subunit">
    <text evidence="1">Homodimer.</text>
</comment>
<comment type="subcellular location">
    <subcellularLocation>
        <location evidence="1">Cytoplasm</location>
    </subcellularLocation>
</comment>
<comment type="similarity">
    <text evidence="1">Belongs to the class-II aminoacyl-tRNA synthetase family. Type 1 subfamily.</text>
</comment>
<sequence length="590" mass="65869">MRTEYCGQLRLSHVGQQVTLCGWVNRRRDLGSLIFIDMRDREGIVQVFFDPDRADALKLASELRNEFCIQVTGTVRARDEKNINRDMATGEIEVLASSLTIINRADVLPLDSNHVNTEEARLKYRYLDLRRPEMAQRLKTRAKITSLVRRFMDDHGFLDIETPMLTKATPEGARDYLVPSRVHKGKFYALPQSPQLFKQLLMMSGFDRYYQIVKCFRDEDLRADRQPEFTQIDVETSFMTAPQVREVMEALVRHLWLEVKGVDLGDFPVMTFAEAERRYGSDKPDLRNPMELTDVADLLKSVEFAVFAGPANDPKGRVAALRVPGGASLTRKQIDEYGNFVKIYGAKGLAYIKVNERAKGLEGINSPVAKFLNAEIIEAILDRTAAQDGDMIFFGADNKKIVADAMGALRLKVGKDLGLTDESKWAPLWVIDFPMFEDDGEGGLTAMHHPFTSPKDMTAAELKAAPENAVANAYDMVINGYEVGGGSVRIHNGDMQQTVFGILGINEEEQREKFGFLLDALKYGTPPHAGLAFGLDRLTMLLTGTDNIRDVIAFPKTTAAACLMTEAPSFANPTALAELSIQVVKKAENN</sequence>
<organism>
    <name type="scientific">Shigella boydii serotype 18 (strain CDC 3083-94 / BS512)</name>
    <dbReference type="NCBI Taxonomy" id="344609"/>
    <lineage>
        <taxon>Bacteria</taxon>
        <taxon>Pseudomonadati</taxon>
        <taxon>Pseudomonadota</taxon>
        <taxon>Gammaproteobacteria</taxon>
        <taxon>Enterobacterales</taxon>
        <taxon>Enterobacteriaceae</taxon>
        <taxon>Shigella</taxon>
    </lineage>
</organism>